<proteinExistence type="inferred from homology"/>
<evidence type="ECO:0000250" key="1"/>
<evidence type="ECO:0000255" key="2"/>
<evidence type="ECO:0000305" key="3"/>
<dbReference type="EMBL" id="D10371">
    <property type="protein sequence ID" value="BAA01207.1"/>
    <property type="molecule type" value="Genomic_RNA"/>
</dbReference>
<dbReference type="PIR" id="JQ1535">
    <property type="entry name" value="JQ1535"/>
</dbReference>
<dbReference type="SMR" id="P28882"/>
<dbReference type="GlyCosmos" id="P28882">
    <property type="glycosylation" value="6 sites, No reported glycans"/>
</dbReference>
<dbReference type="GO" id="GO:0033644">
    <property type="term" value="C:host cell membrane"/>
    <property type="evidence" value="ECO:0007669"/>
    <property type="project" value="UniProtKB-SubCell"/>
</dbReference>
<dbReference type="GO" id="GO:0016020">
    <property type="term" value="C:membrane"/>
    <property type="evidence" value="ECO:0007669"/>
    <property type="project" value="UniProtKB-KW"/>
</dbReference>
<dbReference type="GO" id="GO:0019031">
    <property type="term" value="C:viral envelope"/>
    <property type="evidence" value="ECO:0007669"/>
    <property type="project" value="UniProtKB-KW"/>
</dbReference>
<dbReference type="GO" id="GO:0055036">
    <property type="term" value="C:virion membrane"/>
    <property type="evidence" value="ECO:0007669"/>
    <property type="project" value="UniProtKB-SubCell"/>
</dbReference>
<dbReference type="GO" id="GO:0046789">
    <property type="term" value="F:host cell surface receptor binding"/>
    <property type="evidence" value="ECO:0007669"/>
    <property type="project" value="InterPro"/>
</dbReference>
<dbReference type="GO" id="GO:0046718">
    <property type="term" value="P:symbiont entry into host cell"/>
    <property type="evidence" value="ECO:0007669"/>
    <property type="project" value="UniProtKB-KW"/>
</dbReference>
<dbReference type="GO" id="GO:0019062">
    <property type="term" value="P:virion attachment to host cell"/>
    <property type="evidence" value="ECO:0007669"/>
    <property type="project" value="UniProtKB-KW"/>
</dbReference>
<dbReference type="Gene3D" id="2.120.10.10">
    <property type="match status" value="1"/>
</dbReference>
<dbReference type="InterPro" id="IPR000665">
    <property type="entry name" value="Hemagglutn/HN"/>
</dbReference>
<dbReference type="InterPro" id="IPR036278">
    <property type="entry name" value="Sialidase_sf"/>
</dbReference>
<dbReference type="Pfam" id="PF00423">
    <property type="entry name" value="HN"/>
    <property type="match status" value="1"/>
</dbReference>
<dbReference type="SUPFAM" id="SSF50939">
    <property type="entry name" value="Sialidases"/>
    <property type="match status" value="1"/>
</dbReference>
<reference key="1">
    <citation type="journal article" date="1991" name="J. Gen. Virol.">
        <title>The nucleotide sequence and deduced amino acid composition of the haemagglutinin and fusion proteins of the morbillivirus phocid distemper virus.</title>
        <authorList>
            <person name="Koevamees J."/>
            <person name="Blixenkrone-Moeller M."/>
            <person name="Sharma B."/>
            <person name="Oervell C."/>
            <person name="Norrby E."/>
        </authorList>
    </citation>
    <scope>NUCLEOTIDE SEQUENCE [GENOMIC RNA]</scope>
    <source>
        <strain>Isolate DK88-4A</strain>
    </source>
</reference>
<reference key="2">
    <citation type="journal article" date="1992" name="J. Gen. Virol.">
        <title>Molecular characterization of phocine distemper virus: gene order and sequence of the gene encoding the attachment (H) protein.</title>
        <authorList>
            <person name="Curran M.D."/>
            <person name="O'Loan D."/>
            <person name="Kennedy S."/>
            <person name="Rima B.K."/>
        </authorList>
    </citation>
    <scope>NUCLEOTIDE SEQUENCE [GENOMIC RNA]</scope>
    <source>
        <strain>Ulster/88</strain>
    </source>
</reference>
<reference key="3">
    <citation type="journal article" date="1990" name="Vet. Rec.">
        <title>Nucleotide sequence analysis of phocine distemper virus reveals its distinctness from canine distemper virus.</title>
        <authorList>
            <person name="Curran M.D."/>
            <person name="O'Loan D."/>
            <person name="Rima B.K."/>
            <person name="Kennedy S."/>
        </authorList>
    </citation>
    <scope>PARTIAL NUCLEOTIDE SEQUENCE</scope>
    <source>
        <strain>Ulster/88</strain>
    </source>
</reference>
<protein>
    <recommendedName>
        <fullName>Hemagglutinin glycoprotein</fullName>
    </recommendedName>
</protein>
<accession>P28882</accession>
<comment type="function">
    <text evidence="1">Attaches the virus to cell receptors and thereby initiating infection. Binding of H protein to the receptor induces a conformational change that allows the F protein to trigger virion/cell membranes fusion (By similarity).</text>
</comment>
<comment type="subcellular location">
    <subcellularLocation>
        <location evidence="3">Virion membrane</location>
        <topology evidence="3">Single-pass type II membrane protein</topology>
    </subcellularLocation>
    <subcellularLocation>
        <location>Host membrane</location>
        <topology>Single-pass type II membrane protein</topology>
    </subcellularLocation>
</comment>
<comment type="similarity">
    <text evidence="3">Belongs to the paramyxoviruses hemagglutinin-neuraminidase family. Non-sialidase subfamily.</text>
</comment>
<comment type="caution">
    <text evidence="3">Morbiliviruses hemagglutinins have no neuraminidase activity.</text>
</comment>
<feature type="chain" id="PRO_0000142620" description="Hemagglutinin glycoprotein">
    <location>
        <begin position="1"/>
        <end position="607"/>
    </location>
</feature>
<feature type="topological domain" description="Intravirion" evidence="2">
    <location>
        <begin position="1"/>
        <end position="38"/>
    </location>
</feature>
<feature type="transmembrane region" description="Helical; Signal-anchor for type II membrane protein" evidence="2">
    <location>
        <begin position="39"/>
        <end position="55"/>
    </location>
</feature>
<feature type="topological domain" description="Virion surface" evidence="2">
    <location>
        <begin position="56"/>
        <end position="607"/>
    </location>
</feature>
<feature type="glycosylation site" description="N-linked (GlcNAc...) asparagine; by host" evidence="2">
    <location>
        <position position="149"/>
    </location>
</feature>
<feature type="glycosylation site" description="N-linked (GlcNAc...) asparagine; by host" evidence="2">
    <location>
        <position position="276"/>
    </location>
</feature>
<feature type="glycosylation site" description="N-linked (GlcNAc...) asparagine; by host" evidence="2">
    <location>
        <position position="391"/>
    </location>
</feature>
<feature type="glycosylation site" description="N-linked (GlcNAc...) asparagine; by host" evidence="2">
    <location>
        <position position="422"/>
    </location>
</feature>
<feature type="glycosylation site" description="N-linked (GlcNAc...) asparagine; by host" evidence="2">
    <location>
        <position position="456"/>
    </location>
</feature>
<feature type="glycosylation site" description="N-linked (GlcNAc...) asparagine; by host" evidence="2">
    <location>
        <position position="587"/>
    </location>
</feature>
<feature type="sequence variant">
    <original>K</original>
    <variation>R</variation>
    <location>
        <position position="160"/>
    </location>
</feature>
<feature type="sequence variant">
    <original>P</original>
    <variation>L</variation>
    <location>
        <position position="304"/>
    </location>
</feature>
<feature type="sequence variant">
    <original>S</original>
    <variation>R</variation>
    <location>
        <position position="379"/>
    </location>
</feature>
<organismHost>
    <name type="scientific">Phocidae</name>
    <name type="common">true seals</name>
    <dbReference type="NCBI Taxonomy" id="9709"/>
</organismHost>
<keyword id="KW-0325">Glycoprotein</keyword>
<keyword id="KW-0348">Hemagglutinin</keyword>
<keyword id="KW-1043">Host membrane</keyword>
<keyword id="KW-0945">Host-virus interaction</keyword>
<keyword id="KW-0472">Membrane</keyword>
<keyword id="KW-0735">Signal-anchor</keyword>
<keyword id="KW-0812">Transmembrane</keyword>
<keyword id="KW-1133">Transmembrane helix</keyword>
<keyword id="KW-1161">Viral attachment to host cell</keyword>
<keyword id="KW-0261">Viral envelope protein</keyword>
<keyword id="KW-0946">Virion</keyword>
<keyword id="KW-1160">Virus entry into host cell</keyword>
<name>HEMA_PHODV</name>
<gene>
    <name type="primary">H</name>
</gene>
<organism>
    <name type="scientific">Phocine distemper virus</name>
    <name type="common">PDV</name>
    <dbReference type="NCBI Taxonomy" id="11240"/>
    <lineage>
        <taxon>Viruses</taxon>
        <taxon>Riboviria</taxon>
        <taxon>Orthornavirae</taxon>
        <taxon>Negarnaviricota</taxon>
        <taxon>Haploviricotina</taxon>
        <taxon>Monjiviricetes</taxon>
        <taxon>Mononegavirales</taxon>
        <taxon>Paramyxoviridae</taxon>
        <taxon>Orthoparamyxovirinae</taxon>
        <taxon>Morbillivirus</taxon>
        <taxon>Morbillivirus phocae</taxon>
    </lineage>
</organism>
<sequence length="607" mass="68885">MFSHQDKVGAFYKNNARANSSKLSLVTDEVEERRSPWFLSILLILLVGILILLTITGIRFHQVVKSNLEFNKLLIEDMEKTEAVHHQVKDVLTPLFKIIGDEVGLRLPQKLNEIKQFIVQKTNFFNPNREFDFRELHWCINPPSKVKVNFTQYCEITEFKEATRSVANSILLLTLYRGRDDIFPPYKCRGATTSMGNVFPLAVSLSMSLISKPSEVINMLTAISEGIYGKTYLLVTDDTEENFETPEIRVFEIGFINRWLGDMPLFQTTNYRIISNNSNTKICTIAVGELALASLCTKESTILPNLGDEESQNSVLVVILGLFGATHMDQLEEVIPVAHPSIEKIHITNHRGFIKDSVATWMVPALALSEQGEQINCLSSACKRRTYPMCNQTSWEPFGDKRLPSYGRLTLSLDVSTDLSINVSVAQGPIIFNGDGMDYYEGTLLNSGWLTIPPKNGTILGLINQASKGDQFIVTPHILTFAPRESSTDCHLPIQTYQIQDDDVLLESNLVVLPTQSFEYVVATYDVSRSDHAIVYYVYDPARTVSYTYPFRLRTKGRPDILRIECFVWDGHLWCHQFYRFQLDATNSTSVVENLIRIRFSCDRLDP</sequence>